<reference key="1">
    <citation type="submission" date="2008-10" db="EMBL/GenBank/DDBJ databases">
        <title>Genome sequence of Bacillus cereus G9842.</title>
        <authorList>
            <person name="Dodson R.J."/>
            <person name="Durkin A.S."/>
            <person name="Rosovitz M.J."/>
            <person name="Rasko D.A."/>
            <person name="Hoffmaster A."/>
            <person name="Ravel J."/>
            <person name="Sutton G."/>
        </authorList>
    </citation>
    <scope>NUCLEOTIDE SEQUENCE [LARGE SCALE GENOMIC DNA]</scope>
    <source>
        <strain>G9842</strain>
    </source>
</reference>
<accession>B7IP75</accession>
<evidence type="ECO:0000255" key="1">
    <source>
        <dbReference type="HAMAP-Rule" id="MF_00238"/>
    </source>
</evidence>
<gene>
    <name evidence="1" type="primary">cmk</name>
    <name type="ordered locus">BCG9842_B3792</name>
</gene>
<feature type="chain" id="PRO_1000119008" description="Cytidylate kinase">
    <location>
        <begin position="1"/>
        <end position="225"/>
    </location>
</feature>
<feature type="binding site" evidence="1">
    <location>
        <begin position="11"/>
        <end position="19"/>
    </location>
    <ligand>
        <name>ATP</name>
        <dbReference type="ChEBI" id="CHEBI:30616"/>
    </ligand>
</feature>
<dbReference type="EC" id="2.7.4.25" evidence="1"/>
<dbReference type="EMBL" id="CP001186">
    <property type="protein sequence ID" value="ACK97301.1"/>
    <property type="molecule type" value="Genomic_DNA"/>
</dbReference>
<dbReference type="RefSeq" id="WP_000361254.1">
    <property type="nucleotide sequence ID" value="NC_011772.1"/>
</dbReference>
<dbReference type="SMR" id="B7IP75"/>
<dbReference type="KEGG" id="bcg:BCG9842_B3792"/>
<dbReference type="HOGENOM" id="CLU_079959_0_2_9"/>
<dbReference type="Proteomes" id="UP000006744">
    <property type="component" value="Chromosome"/>
</dbReference>
<dbReference type="GO" id="GO:0005829">
    <property type="term" value="C:cytosol"/>
    <property type="evidence" value="ECO:0007669"/>
    <property type="project" value="TreeGrafter"/>
</dbReference>
<dbReference type="GO" id="GO:0005524">
    <property type="term" value="F:ATP binding"/>
    <property type="evidence" value="ECO:0007669"/>
    <property type="project" value="UniProtKB-UniRule"/>
</dbReference>
<dbReference type="GO" id="GO:0036430">
    <property type="term" value="F:CMP kinase activity"/>
    <property type="evidence" value="ECO:0007669"/>
    <property type="project" value="RHEA"/>
</dbReference>
<dbReference type="GO" id="GO:0036431">
    <property type="term" value="F:dCMP kinase activity"/>
    <property type="evidence" value="ECO:0007669"/>
    <property type="project" value="RHEA"/>
</dbReference>
<dbReference type="GO" id="GO:0015949">
    <property type="term" value="P:nucleobase-containing small molecule interconversion"/>
    <property type="evidence" value="ECO:0007669"/>
    <property type="project" value="TreeGrafter"/>
</dbReference>
<dbReference type="GO" id="GO:0006220">
    <property type="term" value="P:pyrimidine nucleotide metabolic process"/>
    <property type="evidence" value="ECO:0007669"/>
    <property type="project" value="UniProtKB-UniRule"/>
</dbReference>
<dbReference type="CDD" id="cd02020">
    <property type="entry name" value="CMPK"/>
    <property type="match status" value="1"/>
</dbReference>
<dbReference type="FunFam" id="3.40.50.300:FF:000484">
    <property type="entry name" value="Cytidylate kinase"/>
    <property type="match status" value="1"/>
</dbReference>
<dbReference type="Gene3D" id="3.40.50.300">
    <property type="entry name" value="P-loop containing nucleotide triphosphate hydrolases"/>
    <property type="match status" value="1"/>
</dbReference>
<dbReference type="HAMAP" id="MF_00238">
    <property type="entry name" value="Cytidyl_kinase_type1"/>
    <property type="match status" value="1"/>
</dbReference>
<dbReference type="InterPro" id="IPR003136">
    <property type="entry name" value="Cytidylate_kin"/>
</dbReference>
<dbReference type="InterPro" id="IPR011994">
    <property type="entry name" value="Cytidylate_kinase_dom"/>
</dbReference>
<dbReference type="InterPro" id="IPR027417">
    <property type="entry name" value="P-loop_NTPase"/>
</dbReference>
<dbReference type="NCBIfam" id="TIGR00017">
    <property type="entry name" value="cmk"/>
    <property type="match status" value="1"/>
</dbReference>
<dbReference type="PANTHER" id="PTHR21299:SF2">
    <property type="entry name" value="CYTIDYLATE KINASE"/>
    <property type="match status" value="1"/>
</dbReference>
<dbReference type="PANTHER" id="PTHR21299">
    <property type="entry name" value="CYTIDYLATE KINASE/PANTOATE-BETA-ALANINE LIGASE"/>
    <property type="match status" value="1"/>
</dbReference>
<dbReference type="Pfam" id="PF02224">
    <property type="entry name" value="Cytidylate_kin"/>
    <property type="match status" value="1"/>
</dbReference>
<dbReference type="SUPFAM" id="SSF52540">
    <property type="entry name" value="P-loop containing nucleoside triphosphate hydrolases"/>
    <property type="match status" value="1"/>
</dbReference>
<name>KCY_BACC2</name>
<organism>
    <name type="scientific">Bacillus cereus (strain G9842)</name>
    <dbReference type="NCBI Taxonomy" id="405531"/>
    <lineage>
        <taxon>Bacteria</taxon>
        <taxon>Bacillati</taxon>
        <taxon>Bacillota</taxon>
        <taxon>Bacilli</taxon>
        <taxon>Bacillales</taxon>
        <taxon>Bacillaceae</taxon>
        <taxon>Bacillus</taxon>
        <taxon>Bacillus cereus group</taxon>
    </lineage>
</organism>
<protein>
    <recommendedName>
        <fullName evidence="1">Cytidylate kinase</fullName>
        <shortName evidence="1">CK</shortName>
        <ecNumber evidence="1">2.7.4.25</ecNumber>
    </recommendedName>
    <alternativeName>
        <fullName evidence="1">Cytidine monophosphate kinase</fullName>
        <shortName evidence="1">CMP kinase</shortName>
    </alternativeName>
</protein>
<comment type="catalytic activity">
    <reaction evidence="1">
        <text>CMP + ATP = CDP + ADP</text>
        <dbReference type="Rhea" id="RHEA:11600"/>
        <dbReference type="ChEBI" id="CHEBI:30616"/>
        <dbReference type="ChEBI" id="CHEBI:58069"/>
        <dbReference type="ChEBI" id="CHEBI:60377"/>
        <dbReference type="ChEBI" id="CHEBI:456216"/>
        <dbReference type="EC" id="2.7.4.25"/>
    </reaction>
</comment>
<comment type="catalytic activity">
    <reaction evidence="1">
        <text>dCMP + ATP = dCDP + ADP</text>
        <dbReference type="Rhea" id="RHEA:25094"/>
        <dbReference type="ChEBI" id="CHEBI:30616"/>
        <dbReference type="ChEBI" id="CHEBI:57566"/>
        <dbReference type="ChEBI" id="CHEBI:58593"/>
        <dbReference type="ChEBI" id="CHEBI:456216"/>
        <dbReference type="EC" id="2.7.4.25"/>
    </reaction>
</comment>
<comment type="subcellular location">
    <subcellularLocation>
        <location evidence="1">Cytoplasm</location>
    </subcellularLocation>
</comment>
<comment type="similarity">
    <text evidence="1">Belongs to the cytidylate kinase family. Type 1 subfamily.</text>
</comment>
<proteinExistence type="inferred from homology"/>
<sequence length="225" mass="25257">MDKRISIAIDGPAAAGKSTVAKVVAKELSYVYIDTGAMYRTLTYAALEQKVDIENEEQLMEVVRNVNIEFQQGENTQLVFLNGQDVSEVIRTPDVTNRVSIVAKHRLVREEMVRRQQDLAKKGGVVMDGRDIGTHVLPDAEVKIFMLASVEERAERRHLENLNKGFDSNLEQLKEEIAQRDKLDSEREVSPLKKADDALELDTTSLSIEEVVQKIMSIVSGVFAK</sequence>
<keyword id="KW-0067">ATP-binding</keyword>
<keyword id="KW-0963">Cytoplasm</keyword>
<keyword id="KW-0418">Kinase</keyword>
<keyword id="KW-0547">Nucleotide-binding</keyword>
<keyword id="KW-0808">Transferase</keyword>